<evidence type="ECO:0000250" key="1"/>
<evidence type="ECO:0000255" key="2">
    <source>
        <dbReference type="PROSITE-ProRule" id="PRU00182"/>
    </source>
</evidence>
<evidence type="ECO:0000305" key="3"/>
<protein>
    <recommendedName>
        <fullName>Ribosomal large subunit pseudouridine synthase C</fullName>
        <ecNumber>5.4.99.24</ecNumber>
    </recommendedName>
    <alternativeName>
        <fullName>23S rRNA pseudouridine(955/2504/2580) synthase</fullName>
    </alternativeName>
    <alternativeName>
        <fullName>rRNA pseudouridylate synthase C</fullName>
    </alternativeName>
    <alternativeName>
        <fullName>rRNA-uridine isomerase C</fullName>
    </alternativeName>
</protein>
<name>RLUC_ECOL6</name>
<comment type="function">
    <text evidence="1">Responsible for synthesis of pseudouridine from uracil at positions 955, 2504 and 2580 in 23S ribosomal RNA.</text>
</comment>
<comment type="catalytic activity">
    <reaction>
        <text>uridine(955/2504/2580) in 23S rRNA = pseudouridine(955/2504/2580) in 23S rRNA</text>
        <dbReference type="Rhea" id="RHEA:42528"/>
        <dbReference type="Rhea" id="RHEA-COMP:10099"/>
        <dbReference type="Rhea" id="RHEA-COMP:10100"/>
        <dbReference type="ChEBI" id="CHEBI:65314"/>
        <dbReference type="ChEBI" id="CHEBI:65315"/>
        <dbReference type="EC" id="5.4.99.24"/>
    </reaction>
</comment>
<comment type="similarity">
    <text evidence="3">Belongs to the pseudouridine synthase RluA family.</text>
</comment>
<accession>Q8FIP7</accession>
<gene>
    <name type="primary">rluC</name>
    <name type="ordered locus">c1355</name>
</gene>
<dbReference type="EC" id="5.4.99.24"/>
<dbReference type="EMBL" id="AE014075">
    <property type="protein sequence ID" value="AAN79826.1"/>
    <property type="molecule type" value="Genomic_DNA"/>
</dbReference>
<dbReference type="RefSeq" id="WP_000846350.1">
    <property type="nucleotide sequence ID" value="NZ_CP051263.1"/>
</dbReference>
<dbReference type="SMR" id="Q8FIP7"/>
<dbReference type="STRING" id="199310.c1355"/>
<dbReference type="KEGG" id="ecc:c1355"/>
<dbReference type="eggNOG" id="COG0564">
    <property type="taxonomic scope" value="Bacteria"/>
</dbReference>
<dbReference type="HOGENOM" id="CLU_016902_1_1_6"/>
<dbReference type="BioCyc" id="ECOL199310:C1355-MONOMER"/>
<dbReference type="Proteomes" id="UP000001410">
    <property type="component" value="Chromosome"/>
</dbReference>
<dbReference type="GO" id="GO:0160141">
    <property type="term" value="F:23S rRNA pseudouridine(955/2504/2580) synthase activity"/>
    <property type="evidence" value="ECO:0007669"/>
    <property type="project" value="UniProtKB-EC"/>
</dbReference>
<dbReference type="GO" id="GO:0003723">
    <property type="term" value="F:RNA binding"/>
    <property type="evidence" value="ECO:0007669"/>
    <property type="project" value="UniProtKB-KW"/>
</dbReference>
<dbReference type="GO" id="GO:0000455">
    <property type="term" value="P:enzyme-directed rRNA pseudouridine synthesis"/>
    <property type="evidence" value="ECO:0007669"/>
    <property type="project" value="TreeGrafter"/>
</dbReference>
<dbReference type="CDD" id="cd02869">
    <property type="entry name" value="PseudoU_synth_RluA_like"/>
    <property type="match status" value="1"/>
</dbReference>
<dbReference type="CDD" id="cd00165">
    <property type="entry name" value="S4"/>
    <property type="match status" value="1"/>
</dbReference>
<dbReference type="FunFam" id="3.10.290.10:FF:000010">
    <property type="entry name" value="Pseudouridine synthase"/>
    <property type="match status" value="1"/>
</dbReference>
<dbReference type="FunFam" id="3.30.2350.10:FF:000007">
    <property type="entry name" value="Pseudouridine synthase"/>
    <property type="match status" value="1"/>
</dbReference>
<dbReference type="Gene3D" id="3.30.2350.10">
    <property type="entry name" value="Pseudouridine synthase"/>
    <property type="match status" value="1"/>
</dbReference>
<dbReference type="Gene3D" id="3.10.290.10">
    <property type="entry name" value="RNA-binding S4 domain"/>
    <property type="match status" value="1"/>
</dbReference>
<dbReference type="InterPro" id="IPR020103">
    <property type="entry name" value="PsdUridine_synth_cat_dom_sf"/>
</dbReference>
<dbReference type="InterPro" id="IPR006224">
    <property type="entry name" value="PsdUridine_synth_RluA-like_CS"/>
</dbReference>
<dbReference type="InterPro" id="IPR006225">
    <property type="entry name" value="PsdUridine_synth_RluC/D"/>
</dbReference>
<dbReference type="InterPro" id="IPR006145">
    <property type="entry name" value="PsdUridine_synth_RsuA/RluA"/>
</dbReference>
<dbReference type="InterPro" id="IPR050188">
    <property type="entry name" value="RluA_PseudoU_synthase"/>
</dbReference>
<dbReference type="InterPro" id="IPR002942">
    <property type="entry name" value="S4_RNA-bd"/>
</dbReference>
<dbReference type="InterPro" id="IPR036986">
    <property type="entry name" value="S4_RNA-bd_sf"/>
</dbReference>
<dbReference type="NCBIfam" id="NF008249">
    <property type="entry name" value="PRK11025.1"/>
    <property type="match status" value="1"/>
</dbReference>
<dbReference type="NCBIfam" id="TIGR00005">
    <property type="entry name" value="rluA_subfam"/>
    <property type="match status" value="1"/>
</dbReference>
<dbReference type="PANTHER" id="PTHR21600">
    <property type="entry name" value="MITOCHONDRIAL RNA PSEUDOURIDINE SYNTHASE"/>
    <property type="match status" value="1"/>
</dbReference>
<dbReference type="PANTHER" id="PTHR21600:SF92">
    <property type="entry name" value="RIBOSOMAL LARGE SUBUNIT PSEUDOURIDINE SYNTHASE C"/>
    <property type="match status" value="1"/>
</dbReference>
<dbReference type="Pfam" id="PF00849">
    <property type="entry name" value="PseudoU_synth_2"/>
    <property type="match status" value="1"/>
</dbReference>
<dbReference type="Pfam" id="PF01479">
    <property type="entry name" value="S4"/>
    <property type="match status" value="1"/>
</dbReference>
<dbReference type="SMART" id="SM00363">
    <property type="entry name" value="S4"/>
    <property type="match status" value="1"/>
</dbReference>
<dbReference type="SUPFAM" id="SSF55174">
    <property type="entry name" value="Alpha-L RNA-binding motif"/>
    <property type="match status" value="1"/>
</dbReference>
<dbReference type="SUPFAM" id="SSF55120">
    <property type="entry name" value="Pseudouridine synthase"/>
    <property type="match status" value="1"/>
</dbReference>
<dbReference type="PROSITE" id="PS01129">
    <property type="entry name" value="PSI_RLU"/>
    <property type="match status" value="1"/>
</dbReference>
<dbReference type="PROSITE" id="PS50889">
    <property type="entry name" value="S4"/>
    <property type="match status" value="1"/>
</dbReference>
<sequence length="319" mass="36053">MKTETPSVKIVAITADEAGQRIDNFLRTQLKGVPKSMIYRILRKGEVRVNKKRIKPEYKLEAGDEVRIPPVRVAEREEEAVSPHLQKVAALADVILYEDDHILVLNKPSGTAVHGGSGLSFGVIEGLRALRPEARFLELVHRLDRDTSGVLLVAKKRSALRSLHEQLREKGMQKDYLALVRGQWQSYVKSVQAPLLKNILQSGERIVRVSQEGKPSETRFKVEERYAFATLVRCSPVTGRTHQIRVHTQYAGHPIAFDDRYGDREFDRQLTEAGTGLNRLFLHAAALKFTHPGTGEVMRIEAPMDEGLKRCLQKLRNAR</sequence>
<proteinExistence type="inferred from homology"/>
<keyword id="KW-0413">Isomerase</keyword>
<keyword id="KW-1185">Reference proteome</keyword>
<keyword id="KW-0694">RNA-binding</keyword>
<keyword id="KW-0698">rRNA processing</keyword>
<organism>
    <name type="scientific">Escherichia coli O6:H1 (strain CFT073 / ATCC 700928 / UPEC)</name>
    <dbReference type="NCBI Taxonomy" id="199310"/>
    <lineage>
        <taxon>Bacteria</taxon>
        <taxon>Pseudomonadati</taxon>
        <taxon>Pseudomonadota</taxon>
        <taxon>Gammaproteobacteria</taxon>
        <taxon>Enterobacterales</taxon>
        <taxon>Enterobacteriaceae</taxon>
        <taxon>Escherichia</taxon>
    </lineage>
</organism>
<reference key="1">
    <citation type="journal article" date="2002" name="Proc. Natl. Acad. Sci. U.S.A.">
        <title>Extensive mosaic structure revealed by the complete genome sequence of uropathogenic Escherichia coli.</title>
        <authorList>
            <person name="Welch R.A."/>
            <person name="Burland V."/>
            <person name="Plunkett G. III"/>
            <person name="Redford P."/>
            <person name="Roesch P."/>
            <person name="Rasko D."/>
            <person name="Buckles E.L."/>
            <person name="Liou S.-R."/>
            <person name="Boutin A."/>
            <person name="Hackett J."/>
            <person name="Stroud D."/>
            <person name="Mayhew G.F."/>
            <person name="Rose D.J."/>
            <person name="Zhou S."/>
            <person name="Schwartz D.C."/>
            <person name="Perna N.T."/>
            <person name="Mobley H.L.T."/>
            <person name="Donnenberg M.S."/>
            <person name="Blattner F.R."/>
        </authorList>
    </citation>
    <scope>NUCLEOTIDE SEQUENCE [LARGE SCALE GENOMIC DNA]</scope>
    <source>
        <strain>CFT073 / ATCC 700928 / UPEC</strain>
    </source>
</reference>
<feature type="chain" id="PRO_0000162668" description="Ribosomal large subunit pseudouridine synthase C">
    <location>
        <begin position="1"/>
        <end position="319"/>
    </location>
</feature>
<feature type="domain" description="S4 RNA-binding" evidence="2">
    <location>
        <begin position="20"/>
        <end position="83"/>
    </location>
</feature>
<feature type="active site" evidence="1">
    <location>
        <position position="144"/>
    </location>
</feature>